<feature type="chain" id="PRO_0000160881" description="L-idonate 5-dehydrogenase (NAD(P)(+))">
    <location>
        <begin position="1"/>
        <end position="343"/>
    </location>
</feature>
<feature type="binding site" evidence="1">
    <location>
        <position position="40"/>
    </location>
    <ligand>
        <name>Zn(2+)</name>
        <dbReference type="ChEBI" id="CHEBI:29105"/>
        <label>1</label>
        <note>catalytic</note>
    </ligand>
</feature>
<feature type="binding site" evidence="1">
    <location>
        <position position="65"/>
    </location>
    <ligand>
        <name>Zn(2+)</name>
        <dbReference type="ChEBI" id="CHEBI:29105"/>
        <label>1</label>
        <note>catalytic</note>
    </ligand>
</feature>
<feature type="binding site" evidence="1">
    <location>
        <position position="93"/>
    </location>
    <ligand>
        <name>Zn(2+)</name>
        <dbReference type="ChEBI" id="CHEBI:29105"/>
        <label>2</label>
    </ligand>
</feature>
<feature type="binding site" evidence="1">
    <location>
        <position position="96"/>
    </location>
    <ligand>
        <name>Zn(2+)</name>
        <dbReference type="ChEBI" id="CHEBI:29105"/>
        <label>2</label>
    </ligand>
</feature>
<feature type="binding site" evidence="1">
    <location>
        <position position="99"/>
    </location>
    <ligand>
        <name>Zn(2+)</name>
        <dbReference type="ChEBI" id="CHEBI:29105"/>
        <label>2</label>
    </ligand>
</feature>
<feature type="binding site" evidence="1">
    <location>
        <position position="107"/>
    </location>
    <ligand>
        <name>Zn(2+)</name>
        <dbReference type="ChEBI" id="CHEBI:29105"/>
        <label>2</label>
    </ligand>
</feature>
<feature type="binding site" evidence="1">
    <location>
        <position position="153"/>
    </location>
    <ligand>
        <name>Zn(2+)</name>
        <dbReference type="ChEBI" id="CHEBI:29105"/>
        <label>1</label>
        <note>catalytic</note>
    </ligand>
</feature>
<feature type="strand" evidence="4">
    <location>
        <begin position="1"/>
        <end position="12"/>
    </location>
</feature>
<feature type="strand" evidence="4">
    <location>
        <begin position="15"/>
        <end position="25"/>
    </location>
</feature>
<feature type="strand" evidence="4">
    <location>
        <begin position="27"/>
        <end position="39"/>
    </location>
</feature>
<feature type="helix" evidence="4">
    <location>
        <begin position="41"/>
        <end position="48"/>
    </location>
</feature>
<feature type="strand" evidence="4">
    <location>
        <begin position="49"/>
        <end position="52"/>
    </location>
</feature>
<feature type="strand" evidence="4">
    <location>
        <begin position="65"/>
        <end position="76"/>
    </location>
</feature>
<feature type="strand" evidence="4">
    <location>
        <begin position="84"/>
        <end position="87"/>
    </location>
</feature>
<feature type="strand" evidence="4">
    <location>
        <begin position="94"/>
        <end position="96"/>
    </location>
</feature>
<feature type="helix" evidence="4">
    <location>
        <begin position="97"/>
        <end position="100"/>
    </location>
</feature>
<feature type="helix" evidence="4">
    <location>
        <begin position="104"/>
        <end position="106"/>
    </location>
</feature>
<feature type="strand" evidence="4">
    <location>
        <begin position="118"/>
        <end position="120"/>
    </location>
</feature>
<feature type="strand" evidence="4">
    <location>
        <begin position="127"/>
        <end position="132"/>
    </location>
</feature>
<feature type="helix" evidence="4">
    <location>
        <begin position="134"/>
        <end position="136"/>
    </location>
</feature>
<feature type="strand" evidence="4">
    <location>
        <begin position="137"/>
        <end position="139"/>
    </location>
</feature>
<feature type="helix" evidence="4">
    <location>
        <begin position="146"/>
        <end position="149"/>
    </location>
</feature>
<feature type="helix" evidence="4">
    <location>
        <begin position="152"/>
        <end position="164"/>
    </location>
</feature>
<feature type="strand" evidence="4">
    <location>
        <begin position="172"/>
        <end position="176"/>
    </location>
</feature>
<feature type="helix" evidence="4">
    <location>
        <begin position="180"/>
        <end position="192"/>
    </location>
</feature>
<feature type="strand" evidence="4">
    <location>
        <begin position="195"/>
        <end position="200"/>
    </location>
</feature>
<feature type="helix" evidence="4">
    <location>
        <begin position="204"/>
        <end position="212"/>
    </location>
</feature>
<feature type="strand" evidence="4">
    <location>
        <begin position="216"/>
        <end position="219"/>
    </location>
</feature>
<feature type="turn" evidence="4">
    <location>
        <begin position="221"/>
        <end position="223"/>
    </location>
</feature>
<feature type="helix" evidence="4">
    <location>
        <begin position="227"/>
        <end position="230"/>
    </location>
</feature>
<feature type="helix" evidence="4">
    <location>
        <begin position="231"/>
        <end position="233"/>
    </location>
</feature>
<feature type="strand" evidence="4">
    <location>
        <begin position="235"/>
        <end position="241"/>
    </location>
</feature>
<feature type="helix" evidence="4">
    <location>
        <begin position="246"/>
        <end position="255"/>
    </location>
</feature>
<feature type="strand" evidence="4">
    <location>
        <begin position="256"/>
        <end position="264"/>
    </location>
</feature>
<feature type="helix" evidence="4">
    <location>
        <begin position="276"/>
        <end position="282"/>
    </location>
</feature>
<feature type="strand" evidence="4">
    <location>
        <begin position="285"/>
        <end position="288"/>
    </location>
</feature>
<feature type="helix" evidence="4">
    <location>
        <begin position="295"/>
        <end position="304"/>
    </location>
</feature>
<feature type="helix" evidence="4">
    <location>
        <begin position="311"/>
        <end position="313"/>
    </location>
</feature>
<feature type="strand" evidence="4">
    <location>
        <begin position="314"/>
        <end position="319"/>
    </location>
</feature>
<feature type="helix" evidence="4">
    <location>
        <begin position="323"/>
        <end position="330"/>
    </location>
</feature>
<feature type="turn" evidence="4">
    <location>
        <begin position="333"/>
        <end position="335"/>
    </location>
</feature>
<feature type="strand" evidence="4">
    <location>
        <begin position="337"/>
        <end position="342"/>
    </location>
</feature>
<evidence type="ECO:0000250" key="1"/>
<evidence type="ECO:0000269" key="2">
    <source>
    </source>
</evidence>
<evidence type="ECO:0000305" key="3"/>
<evidence type="ECO:0007829" key="4">
    <source>
        <dbReference type="PDB" id="6DKH"/>
    </source>
</evidence>
<accession>P39346</accession>
<accession>Q2M642</accession>
<organism>
    <name type="scientific">Escherichia coli (strain K12)</name>
    <dbReference type="NCBI Taxonomy" id="83333"/>
    <lineage>
        <taxon>Bacteria</taxon>
        <taxon>Pseudomonadati</taxon>
        <taxon>Pseudomonadota</taxon>
        <taxon>Gammaproteobacteria</taxon>
        <taxon>Enterobacterales</taxon>
        <taxon>Enterobacteriaceae</taxon>
        <taxon>Escherichia</taxon>
    </lineage>
</organism>
<sequence length="343" mass="37147">MQVKTQSCVVAGKKTVAVTEQTIDWNNNGTLVQITRGGICGSDLHYYQEGKVGNFMIKAPMVLGHEVIGKVIHSDSSELHEGQTVAINPSKPCGHCKYCIEHNENQCTDMRFFGSAMYFPHVDGGFTRYKMVETSQCVPYPAKADEKVMAFAEPLAVAIHAAHQAGELQGKRVFISGVGPIGCLIVSAVKTLGAAEIVCADVSPRSLSLGKEMGADVLVNPQNDDMDHWKAEKGYFDVSFEVSGHPSSVNTCLEVTRARGVMVQVGMGGAMAEFPMMTLIGKEISLRGSFRFTSEFNTAVSWLANGVINPLPLLSAEYPFTDLEEALRFAGDKTQAAKVQLVF</sequence>
<dbReference type="EC" id="1.1.1.264"/>
<dbReference type="EMBL" id="U14003">
    <property type="protein sequence ID" value="AAA97164.1"/>
    <property type="molecule type" value="Genomic_DNA"/>
</dbReference>
<dbReference type="EMBL" id="U00096">
    <property type="protein sequence ID" value="AAC77224.1"/>
    <property type="molecule type" value="Genomic_DNA"/>
</dbReference>
<dbReference type="EMBL" id="AP009048">
    <property type="protein sequence ID" value="BAE78264.1"/>
    <property type="molecule type" value="Genomic_DNA"/>
</dbReference>
<dbReference type="PIR" id="S56493">
    <property type="entry name" value="S56493"/>
</dbReference>
<dbReference type="RefSeq" id="NP_418688.1">
    <property type="nucleotide sequence ID" value="NC_000913.3"/>
</dbReference>
<dbReference type="RefSeq" id="WP_001197411.1">
    <property type="nucleotide sequence ID" value="NZ_SSUV01000014.1"/>
</dbReference>
<dbReference type="PDB" id="6DKH">
    <property type="method" value="X-ray"/>
    <property type="resolution" value="2.61 A"/>
    <property type="chains" value="A/B/C/D=1-343"/>
</dbReference>
<dbReference type="PDBsum" id="6DKH"/>
<dbReference type="SMR" id="P39346"/>
<dbReference type="BioGRID" id="4259666">
    <property type="interactions" value="724"/>
</dbReference>
<dbReference type="DIP" id="DIP-10010N"/>
<dbReference type="FunCoup" id="P39346">
    <property type="interactions" value="90"/>
</dbReference>
<dbReference type="IntAct" id="P39346">
    <property type="interactions" value="5"/>
</dbReference>
<dbReference type="STRING" id="511145.b4267"/>
<dbReference type="PaxDb" id="511145-b4267"/>
<dbReference type="EnsemblBacteria" id="AAC77224">
    <property type="protein sequence ID" value="AAC77224"/>
    <property type="gene ID" value="b4267"/>
</dbReference>
<dbReference type="GeneID" id="944769"/>
<dbReference type="KEGG" id="ecj:JW4224"/>
<dbReference type="KEGG" id="eco:b4267"/>
<dbReference type="KEGG" id="ecoc:C3026_23015"/>
<dbReference type="PATRIC" id="fig|1411691.4.peg.2436"/>
<dbReference type="EchoBASE" id="EB2430"/>
<dbReference type="eggNOG" id="COG1063">
    <property type="taxonomic scope" value="Bacteria"/>
</dbReference>
<dbReference type="HOGENOM" id="CLU_026673_11_5_6"/>
<dbReference type="InParanoid" id="P39346"/>
<dbReference type="OMA" id="MGLMMLE"/>
<dbReference type="OrthoDB" id="9773078at2"/>
<dbReference type="PhylomeDB" id="P39346"/>
<dbReference type="BioCyc" id="EcoCyc:IDONDEHYD-MONOMER"/>
<dbReference type="BioCyc" id="MetaCyc:IDONDEHYD-MONOMER"/>
<dbReference type="BRENDA" id="1.1.1.264">
    <property type="organism ID" value="2026"/>
</dbReference>
<dbReference type="UniPathway" id="UPA00793"/>
<dbReference type="PRO" id="PR:P39346"/>
<dbReference type="Proteomes" id="UP000000625">
    <property type="component" value="Chromosome"/>
</dbReference>
<dbReference type="GO" id="GO:0102198">
    <property type="term" value="F:L-idonate 5-dehydrogenase (NAD+) activity"/>
    <property type="evidence" value="ECO:0007669"/>
    <property type="project" value="RHEA"/>
</dbReference>
<dbReference type="GO" id="GO:0050572">
    <property type="term" value="F:L-idonate 5-dehydrogenase [NAD(P)+] activity"/>
    <property type="evidence" value="ECO:0000314"/>
    <property type="project" value="EcoCyc"/>
</dbReference>
<dbReference type="GO" id="GO:0046872">
    <property type="term" value="F:metal ion binding"/>
    <property type="evidence" value="ECO:0007669"/>
    <property type="project" value="UniProtKB-KW"/>
</dbReference>
<dbReference type="GO" id="GO:0019521">
    <property type="term" value="P:D-gluconate metabolic process"/>
    <property type="evidence" value="ECO:0007669"/>
    <property type="project" value="UniProtKB-KW"/>
</dbReference>
<dbReference type="GO" id="GO:0046183">
    <property type="term" value="P:L-idonate catabolic process"/>
    <property type="evidence" value="ECO:0000315"/>
    <property type="project" value="EcoCyc"/>
</dbReference>
<dbReference type="CDD" id="cd08232">
    <property type="entry name" value="idonate-5-DH"/>
    <property type="match status" value="1"/>
</dbReference>
<dbReference type="Gene3D" id="3.90.180.10">
    <property type="entry name" value="Medium-chain alcohol dehydrogenases, catalytic domain"/>
    <property type="match status" value="1"/>
</dbReference>
<dbReference type="Gene3D" id="3.40.50.720">
    <property type="entry name" value="NAD(P)-binding Rossmann-like Domain"/>
    <property type="match status" value="1"/>
</dbReference>
<dbReference type="InterPro" id="IPR013149">
    <property type="entry name" value="ADH-like_C"/>
</dbReference>
<dbReference type="InterPro" id="IPR013154">
    <property type="entry name" value="ADH-like_N"/>
</dbReference>
<dbReference type="InterPro" id="IPR011032">
    <property type="entry name" value="GroES-like_sf"/>
</dbReference>
<dbReference type="InterPro" id="IPR036291">
    <property type="entry name" value="NAD(P)-bd_dom_sf"/>
</dbReference>
<dbReference type="NCBIfam" id="NF007375">
    <property type="entry name" value="PRK09880.1"/>
    <property type="match status" value="1"/>
</dbReference>
<dbReference type="PANTHER" id="PTHR43161">
    <property type="entry name" value="SORBITOL DEHYDROGENASE"/>
    <property type="match status" value="1"/>
</dbReference>
<dbReference type="PANTHER" id="PTHR43161:SF9">
    <property type="entry name" value="SORBITOL DEHYDROGENASE"/>
    <property type="match status" value="1"/>
</dbReference>
<dbReference type="Pfam" id="PF08240">
    <property type="entry name" value="ADH_N"/>
    <property type="match status" value="1"/>
</dbReference>
<dbReference type="Pfam" id="PF00107">
    <property type="entry name" value="ADH_zinc_N"/>
    <property type="match status" value="1"/>
</dbReference>
<dbReference type="SUPFAM" id="SSF50129">
    <property type="entry name" value="GroES-like"/>
    <property type="match status" value="1"/>
</dbReference>
<dbReference type="SUPFAM" id="SSF51735">
    <property type="entry name" value="NAD(P)-binding Rossmann-fold domains"/>
    <property type="match status" value="1"/>
</dbReference>
<reference key="1">
    <citation type="journal article" date="1995" name="Nucleic Acids Res.">
        <title>Analysis of the Escherichia coli genome VI: DNA sequence of the region from 92.8 through 100 minutes.</title>
        <authorList>
            <person name="Burland V.D."/>
            <person name="Plunkett G. III"/>
            <person name="Sofia H.J."/>
            <person name="Daniels D.L."/>
            <person name="Blattner F.R."/>
        </authorList>
    </citation>
    <scope>NUCLEOTIDE SEQUENCE [LARGE SCALE GENOMIC DNA]</scope>
    <source>
        <strain>K12 / MG1655 / ATCC 47076</strain>
    </source>
</reference>
<reference key="2">
    <citation type="journal article" date="1997" name="Science">
        <title>The complete genome sequence of Escherichia coli K-12.</title>
        <authorList>
            <person name="Blattner F.R."/>
            <person name="Plunkett G. III"/>
            <person name="Bloch C.A."/>
            <person name="Perna N.T."/>
            <person name="Burland V."/>
            <person name="Riley M."/>
            <person name="Collado-Vides J."/>
            <person name="Glasner J.D."/>
            <person name="Rode C.K."/>
            <person name="Mayhew G.F."/>
            <person name="Gregor J."/>
            <person name="Davis N.W."/>
            <person name="Kirkpatrick H.A."/>
            <person name="Goeden M.A."/>
            <person name="Rose D.J."/>
            <person name="Mau B."/>
            <person name="Shao Y."/>
        </authorList>
    </citation>
    <scope>NUCLEOTIDE SEQUENCE [LARGE SCALE GENOMIC DNA]</scope>
    <source>
        <strain>K12 / MG1655 / ATCC 47076</strain>
    </source>
</reference>
<reference key="3">
    <citation type="journal article" date="2006" name="Mol. Syst. Biol.">
        <title>Highly accurate genome sequences of Escherichia coli K-12 strains MG1655 and W3110.</title>
        <authorList>
            <person name="Hayashi K."/>
            <person name="Morooka N."/>
            <person name="Yamamoto Y."/>
            <person name="Fujita K."/>
            <person name="Isono K."/>
            <person name="Choi S."/>
            <person name="Ohtsubo E."/>
            <person name="Baba T."/>
            <person name="Wanner B.L."/>
            <person name="Mori H."/>
            <person name="Horiuchi T."/>
        </authorList>
    </citation>
    <scope>NUCLEOTIDE SEQUENCE [LARGE SCALE GENOMIC DNA]</scope>
    <source>
        <strain>K12 / W3110 / ATCC 27325 / DSM 5911</strain>
    </source>
</reference>
<reference key="4">
    <citation type="journal article" date="1998" name="J. Bacteriol.">
        <title>Sequence analysis of the GntII (subsidiary) system for gluconate metabolism reveals a novel pathway for L-idonic acid catabolism in Escherichia coli.</title>
        <authorList>
            <person name="Bausch C."/>
            <person name="Peekhaus N."/>
            <person name="Utz C."/>
            <person name="Blais T."/>
            <person name="Murray E."/>
            <person name="Lowary T."/>
            <person name="Conway T."/>
        </authorList>
    </citation>
    <scope>FUNCTION</scope>
    <scope>CATALYTIC ACTIVITY</scope>
</reference>
<name>IDND_ECOLI</name>
<comment type="function">
    <text evidence="2">Catalyzes the NADH/NADPH-dependent oxidation of L-idonate to 5-ketogluconate (5KG).</text>
</comment>
<comment type="catalytic activity">
    <reaction evidence="2">
        <text>L-idonate + NADP(+) = 5-dehydro-D-gluconate + NADPH + H(+)</text>
        <dbReference type="Rhea" id="RHEA:21176"/>
        <dbReference type="ChEBI" id="CHEBI:15378"/>
        <dbReference type="ChEBI" id="CHEBI:17796"/>
        <dbReference type="ChEBI" id="CHEBI:57783"/>
        <dbReference type="ChEBI" id="CHEBI:58143"/>
        <dbReference type="ChEBI" id="CHEBI:58349"/>
        <dbReference type="EC" id="1.1.1.264"/>
    </reaction>
</comment>
<comment type="catalytic activity">
    <reaction evidence="2">
        <text>L-idonate + NAD(+) = 5-dehydro-D-gluconate + NADH + H(+)</text>
        <dbReference type="Rhea" id="RHEA:21172"/>
        <dbReference type="ChEBI" id="CHEBI:15378"/>
        <dbReference type="ChEBI" id="CHEBI:17796"/>
        <dbReference type="ChEBI" id="CHEBI:57540"/>
        <dbReference type="ChEBI" id="CHEBI:57945"/>
        <dbReference type="ChEBI" id="CHEBI:58143"/>
        <dbReference type="EC" id="1.1.1.264"/>
    </reaction>
</comment>
<comment type="cofactor">
    <cofactor evidence="1">
        <name>Zn(2+)</name>
        <dbReference type="ChEBI" id="CHEBI:29105"/>
    </cofactor>
    <text evidence="1">Binds 2 Zn(2+) ions per subunit.</text>
</comment>
<comment type="pathway">
    <text>Carbohydrate acid metabolism; L-idonate degradation.</text>
</comment>
<comment type="interaction">
    <interactant intactId="EBI-552913">
        <id>P39346</id>
    </interactant>
    <interactant intactId="EBI-542856">
        <id>P0A9P0</id>
        <label>lpdA</label>
    </interactant>
    <organismsDiffer>false</organismsDiffer>
    <experiments>2</experiments>
</comment>
<comment type="similarity">
    <text evidence="3">Belongs to the zinc-containing alcohol dehydrogenase family.</text>
</comment>
<gene>
    <name type="primary">idnD</name>
    <name type="synonym">yjgV</name>
    <name type="ordered locus">b4267</name>
    <name type="ordered locus">JW4224</name>
</gene>
<keyword id="KW-0002">3D-structure</keyword>
<keyword id="KW-0311">Gluconate utilization</keyword>
<keyword id="KW-0479">Metal-binding</keyword>
<keyword id="KW-0521">NADP</keyword>
<keyword id="KW-0560">Oxidoreductase</keyword>
<keyword id="KW-1185">Reference proteome</keyword>
<keyword id="KW-0862">Zinc</keyword>
<proteinExistence type="evidence at protein level"/>
<protein>
    <recommendedName>
        <fullName>L-idonate 5-dehydrogenase (NAD(P)(+))</fullName>
        <ecNumber>1.1.1.264</ecNumber>
    </recommendedName>
</protein>